<organism>
    <name type="scientific">Yersinia pestis bv. Antiqua (strain Antiqua)</name>
    <dbReference type="NCBI Taxonomy" id="360102"/>
    <lineage>
        <taxon>Bacteria</taxon>
        <taxon>Pseudomonadati</taxon>
        <taxon>Pseudomonadota</taxon>
        <taxon>Gammaproteobacteria</taxon>
        <taxon>Enterobacterales</taxon>
        <taxon>Yersiniaceae</taxon>
        <taxon>Yersinia</taxon>
    </lineage>
</organism>
<name>AAS_YERPA</name>
<reference key="1">
    <citation type="journal article" date="2006" name="J. Bacteriol.">
        <title>Complete genome sequence of Yersinia pestis strains Antiqua and Nepal516: evidence of gene reduction in an emerging pathogen.</title>
        <authorList>
            <person name="Chain P.S.G."/>
            <person name="Hu P."/>
            <person name="Malfatti S.A."/>
            <person name="Radnedge L."/>
            <person name="Larimer F."/>
            <person name="Vergez L.M."/>
            <person name="Worsham P."/>
            <person name="Chu M.C."/>
            <person name="Andersen G.L."/>
        </authorList>
    </citation>
    <scope>NUCLEOTIDE SEQUENCE [LARGE SCALE GENOMIC DNA]</scope>
    <source>
        <strain>Antiqua</strain>
    </source>
</reference>
<keyword id="KW-0012">Acyltransferase</keyword>
<keyword id="KW-0067">ATP-binding</keyword>
<keyword id="KW-0997">Cell inner membrane</keyword>
<keyword id="KW-1003">Cell membrane</keyword>
<keyword id="KW-0436">Ligase</keyword>
<keyword id="KW-0472">Membrane</keyword>
<keyword id="KW-0511">Multifunctional enzyme</keyword>
<keyword id="KW-0547">Nucleotide-binding</keyword>
<keyword id="KW-0808">Transferase</keyword>
<keyword id="KW-0812">Transmembrane</keyword>
<keyword id="KW-1133">Transmembrane helix</keyword>
<proteinExistence type="inferred from homology"/>
<sequence>MAYRLLRALFRGLFRVTIDGVTDQFKHEKLIITPNHVSFLDGALLALFLPIKPVFAVYTSITDTWYMRWLKPYVDFVALDPTNPMAIKHLVRMVEQGRPVVIFPEGRITVTGSLMKIYDGAAFVAAKSGAAVVPIRLDGPEFTHFGRLQGVLKTRWFPKISIHVLPATTIPMPQAPRSRERRVLAGEHLHTIMMAARMATVPRETLFEALLSAQTRYGRFKPCIEDVSFKEDSYQTLLKKTLGVSRILQRFTVPGEHVGMLLPNATITAAAIFGASLRGRIPALLNYTSGAKGLQSAIIAASLKTIVTSRQFLEKGKLTHLPEQVNEVNWVYLEDLKDTVTLTDKLWILFHLCFPRRAMLPQQADGSALILFTSGSEGNPKGVVHSHASLLANVEQIRTIADFTPRDRFMSSLPLFHAFGLTVGLFTPLMTGSRVFLYPSPLHYRVVPELVYDRNCTVLFGTSTFLGNYARFAHPYDFARVRYVVAGAEKLAESTKQIWQDKFGIRILEGYGVTECAPVVAINVPMAAKVNTVGRILPGMEARLINVPGIAQGGRLQLRGPNIMRGYLRVENPGVLEQPSAENAQGELDANWYDTGDIVTLDEQGFCAIRGRVKRFAKLAGEMVSLESVEQLAISLSPEGQHAAAAKTDSAKGEALVLFTTDSEITRERLIKVARENGVPELAVPRDIRVVKALPLLGSGKPDFVTLGKMAQDPEMSV</sequence>
<comment type="function">
    <text evidence="1">Plays a role in lysophospholipid acylation. Transfers fatty acids to the 1-position via an enzyme-bound acyl-ACP intermediate in the presence of ATP and magnesium. Its physiological function is to regenerate phosphatidylethanolamine from 2-acyl-glycero-3-phosphoethanolamine (2-acyl-GPE) formed by transacylation reactions or degradation by phospholipase A1.</text>
</comment>
<comment type="catalytic activity">
    <reaction evidence="1">
        <text>a 2-acyl-sn-glycero-3-phosphoethanolamine + a fatty acyl-[ACP] = a 1,2-diacyl-sn-glycero-3-phosphoethanolamine + holo-[ACP]</text>
        <dbReference type="Rhea" id="RHEA:10304"/>
        <dbReference type="Rhea" id="RHEA-COMP:9685"/>
        <dbReference type="Rhea" id="RHEA-COMP:14125"/>
        <dbReference type="ChEBI" id="CHEBI:64479"/>
        <dbReference type="ChEBI" id="CHEBI:64612"/>
        <dbReference type="ChEBI" id="CHEBI:65213"/>
        <dbReference type="ChEBI" id="CHEBI:138651"/>
        <dbReference type="EC" id="2.3.1.40"/>
    </reaction>
</comment>
<comment type="catalytic activity">
    <reaction evidence="1">
        <text>a long-chain fatty acid + holo-[ACP] + ATP = a long-chain fatty acyl-[ACP] + AMP + diphosphate</text>
        <dbReference type="Rhea" id="RHEA:45588"/>
        <dbReference type="Rhea" id="RHEA-COMP:9685"/>
        <dbReference type="Rhea" id="RHEA-COMP:12682"/>
        <dbReference type="ChEBI" id="CHEBI:30616"/>
        <dbReference type="ChEBI" id="CHEBI:33019"/>
        <dbReference type="ChEBI" id="CHEBI:57560"/>
        <dbReference type="ChEBI" id="CHEBI:64479"/>
        <dbReference type="ChEBI" id="CHEBI:133243"/>
        <dbReference type="ChEBI" id="CHEBI:456215"/>
        <dbReference type="EC" id="6.2.1.20"/>
    </reaction>
</comment>
<comment type="subcellular location">
    <subcellularLocation>
        <location evidence="1">Cell inner membrane</location>
        <topology evidence="1">Multi-pass membrane protein</topology>
    </subcellularLocation>
</comment>
<comment type="similarity">
    <text evidence="1">In the N-terminal section; belongs to the 2-acyl-GPE acetyltransferase family.</text>
</comment>
<comment type="similarity">
    <text evidence="1">In the C-terminal section; belongs to the ATP-dependent AMP-binding enzyme family.</text>
</comment>
<feature type="chain" id="PRO_1000065647" description="Bifunctional protein Aas">
    <location>
        <begin position="1"/>
        <end position="718"/>
    </location>
</feature>
<feature type="transmembrane region" description="Helical" evidence="1">
    <location>
        <begin position="258"/>
        <end position="277"/>
    </location>
</feature>
<feature type="transmembrane region" description="Helical" evidence="1">
    <location>
        <begin position="409"/>
        <end position="433"/>
    </location>
</feature>
<feature type="region of interest" description="Acyltransferase">
    <location>
        <begin position="15"/>
        <end position="138"/>
    </location>
</feature>
<feature type="region of interest" description="AMP-binding">
    <location>
        <begin position="233"/>
        <end position="646"/>
    </location>
</feature>
<feature type="active site" evidence="1">
    <location>
        <position position="36"/>
    </location>
</feature>
<accession>Q1CAS8</accession>
<evidence type="ECO:0000255" key="1">
    <source>
        <dbReference type="HAMAP-Rule" id="MF_01162"/>
    </source>
</evidence>
<protein>
    <recommendedName>
        <fullName evidence="1">Bifunctional protein Aas</fullName>
    </recommendedName>
    <domain>
        <recommendedName>
            <fullName evidence="1">2-acylglycerophosphoethanolamine acyltransferase</fullName>
            <ecNumber evidence="1">2.3.1.40</ecNumber>
        </recommendedName>
        <alternativeName>
            <fullName evidence="1">2-acyl-GPE acyltransferase</fullName>
        </alternativeName>
        <alternativeName>
            <fullName evidence="1">Acyl-[acyl-carrier-protein]--phospholipid O-acyltransferase</fullName>
        </alternativeName>
    </domain>
    <domain>
        <recommendedName>
            <fullName evidence="1">Acyl-[acyl-carrier-protein] synthetase</fullName>
            <ecNumber evidence="1">6.2.1.20</ecNumber>
        </recommendedName>
        <alternativeName>
            <fullName evidence="1">Acyl-ACP synthetase</fullName>
        </alternativeName>
        <alternativeName>
            <fullName evidence="1">Long-chain-fatty-acid--[acyl-carrier-protein] ligase</fullName>
        </alternativeName>
    </domain>
</protein>
<gene>
    <name evidence="1" type="primary">aas</name>
    <name type="ordered locus">YPA_0476</name>
</gene>
<dbReference type="EC" id="2.3.1.40" evidence="1"/>
<dbReference type="EC" id="6.2.1.20" evidence="1"/>
<dbReference type="EMBL" id="CP000308">
    <property type="protein sequence ID" value="ABG12444.1"/>
    <property type="molecule type" value="Genomic_DNA"/>
</dbReference>
<dbReference type="RefSeq" id="WP_002209843.1">
    <property type="nucleotide sequence ID" value="NZ_CP009906.1"/>
</dbReference>
<dbReference type="SMR" id="Q1CAS8"/>
<dbReference type="GeneID" id="57973842"/>
<dbReference type="KEGG" id="ypa:YPA_0476"/>
<dbReference type="Proteomes" id="UP000001971">
    <property type="component" value="Chromosome"/>
</dbReference>
<dbReference type="GO" id="GO:0005886">
    <property type="term" value="C:plasma membrane"/>
    <property type="evidence" value="ECO:0007669"/>
    <property type="project" value="UniProtKB-SubCell"/>
</dbReference>
<dbReference type="GO" id="GO:0008779">
    <property type="term" value="F:acyl-[acyl-carrier-protein]-phospholipid O-acyltransferase activity"/>
    <property type="evidence" value="ECO:0007669"/>
    <property type="project" value="UniProtKB-UniRule"/>
</dbReference>
<dbReference type="GO" id="GO:0005524">
    <property type="term" value="F:ATP binding"/>
    <property type="evidence" value="ECO:0007669"/>
    <property type="project" value="UniProtKB-KW"/>
</dbReference>
<dbReference type="GO" id="GO:0008922">
    <property type="term" value="F:long-chain fatty acid [acyl-carrier-protein] ligase activity"/>
    <property type="evidence" value="ECO:0007669"/>
    <property type="project" value="UniProtKB-UniRule"/>
</dbReference>
<dbReference type="GO" id="GO:0031956">
    <property type="term" value="F:medium-chain fatty acid-CoA ligase activity"/>
    <property type="evidence" value="ECO:0007669"/>
    <property type="project" value="TreeGrafter"/>
</dbReference>
<dbReference type="GO" id="GO:0006631">
    <property type="term" value="P:fatty acid metabolic process"/>
    <property type="evidence" value="ECO:0007669"/>
    <property type="project" value="InterPro"/>
</dbReference>
<dbReference type="GO" id="GO:0008654">
    <property type="term" value="P:phospholipid biosynthetic process"/>
    <property type="evidence" value="ECO:0007669"/>
    <property type="project" value="InterPro"/>
</dbReference>
<dbReference type="CDD" id="cd07989">
    <property type="entry name" value="LPLAT_AGPAT-like"/>
    <property type="match status" value="1"/>
</dbReference>
<dbReference type="Gene3D" id="3.30.300.30">
    <property type="match status" value="1"/>
</dbReference>
<dbReference type="Gene3D" id="3.40.50.12780">
    <property type="entry name" value="N-terminal domain of ligase-like"/>
    <property type="match status" value="1"/>
</dbReference>
<dbReference type="HAMAP" id="MF_01162">
    <property type="entry name" value="Aas"/>
    <property type="match status" value="1"/>
</dbReference>
<dbReference type="InterPro" id="IPR023775">
    <property type="entry name" value="Aas"/>
</dbReference>
<dbReference type="InterPro" id="IPR025110">
    <property type="entry name" value="AMP-bd_C"/>
</dbReference>
<dbReference type="InterPro" id="IPR045851">
    <property type="entry name" value="AMP-bd_C_sf"/>
</dbReference>
<dbReference type="InterPro" id="IPR020845">
    <property type="entry name" value="AMP-binding_CS"/>
</dbReference>
<dbReference type="InterPro" id="IPR000873">
    <property type="entry name" value="AMP-dep_synth/lig_dom"/>
</dbReference>
<dbReference type="InterPro" id="IPR042099">
    <property type="entry name" value="ANL_N_sf"/>
</dbReference>
<dbReference type="InterPro" id="IPR002123">
    <property type="entry name" value="Plipid/glycerol_acylTrfase"/>
</dbReference>
<dbReference type="NCBIfam" id="NF005959">
    <property type="entry name" value="PRK08043.1"/>
    <property type="match status" value="1"/>
</dbReference>
<dbReference type="PANTHER" id="PTHR43201">
    <property type="entry name" value="ACYL-COA SYNTHETASE"/>
    <property type="match status" value="1"/>
</dbReference>
<dbReference type="PANTHER" id="PTHR43201:SF5">
    <property type="entry name" value="MEDIUM-CHAIN ACYL-COA LIGASE ACSF2, MITOCHONDRIAL"/>
    <property type="match status" value="1"/>
</dbReference>
<dbReference type="Pfam" id="PF01553">
    <property type="entry name" value="Acyltransferase"/>
    <property type="match status" value="1"/>
</dbReference>
<dbReference type="Pfam" id="PF00501">
    <property type="entry name" value="AMP-binding"/>
    <property type="match status" value="1"/>
</dbReference>
<dbReference type="Pfam" id="PF13193">
    <property type="entry name" value="AMP-binding_C"/>
    <property type="match status" value="1"/>
</dbReference>
<dbReference type="SMART" id="SM00563">
    <property type="entry name" value="PlsC"/>
    <property type="match status" value="1"/>
</dbReference>
<dbReference type="SUPFAM" id="SSF56801">
    <property type="entry name" value="Acetyl-CoA synthetase-like"/>
    <property type="match status" value="1"/>
</dbReference>
<dbReference type="SUPFAM" id="SSF69593">
    <property type="entry name" value="Glycerol-3-phosphate (1)-acyltransferase"/>
    <property type="match status" value="1"/>
</dbReference>
<dbReference type="PROSITE" id="PS00455">
    <property type="entry name" value="AMP_BINDING"/>
    <property type="match status" value="1"/>
</dbReference>